<proteinExistence type="evidence at transcript level"/>
<dbReference type="EMBL" id="FK725608">
    <property type="status" value="NOT_ANNOTATED_CDS"/>
    <property type="molecule type" value="mRNA"/>
</dbReference>
<dbReference type="EMBL" id="FK742129">
    <property type="status" value="NOT_ANNOTATED_CDS"/>
    <property type="molecule type" value="mRNA"/>
</dbReference>
<dbReference type="SMR" id="P0DMY4"/>
<dbReference type="GO" id="GO:0005576">
    <property type="term" value="C:extracellular region"/>
    <property type="evidence" value="ECO:0007669"/>
    <property type="project" value="UniProtKB-SubCell"/>
</dbReference>
<dbReference type="GO" id="GO:0042151">
    <property type="term" value="C:nematocyst"/>
    <property type="evidence" value="ECO:0007669"/>
    <property type="project" value="UniProtKB-SubCell"/>
</dbReference>
<dbReference type="GO" id="GO:0008200">
    <property type="term" value="F:ion channel inhibitor activity"/>
    <property type="evidence" value="ECO:0007669"/>
    <property type="project" value="InterPro"/>
</dbReference>
<dbReference type="GO" id="GO:0015459">
    <property type="term" value="F:potassium channel regulator activity"/>
    <property type="evidence" value="ECO:0007669"/>
    <property type="project" value="UniProtKB-KW"/>
</dbReference>
<dbReference type="GO" id="GO:0090729">
    <property type="term" value="F:toxin activity"/>
    <property type="evidence" value="ECO:0007669"/>
    <property type="project" value="UniProtKB-KW"/>
</dbReference>
<dbReference type="GO" id="GO:0008217">
    <property type="term" value="P:regulation of blood pressure"/>
    <property type="evidence" value="ECO:0007669"/>
    <property type="project" value="UniProtKB-KW"/>
</dbReference>
<dbReference type="Gene3D" id="2.20.20.10">
    <property type="entry name" value="Anthopleurin-A"/>
    <property type="match status" value="1"/>
</dbReference>
<dbReference type="InterPro" id="IPR012414">
    <property type="entry name" value="BDS_K_chnl_tox"/>
</dbReference>
<dbReference type="InterPro" id="IPR023355">
    <property type="entry name" value="Myo_ane_neurotoxin_sf"/>
</dbReference>
<dbReference type="Pfam" id="PF07936">
    <property type="entry name" value="Defensin_4"/>
    <property type="match status" value="1"/>
</dbReference>
<dbReference type="SUPFAM" id="SSF57392">
    <property type="entry name" value="Defensin-like"/>
    <property type="match status" value="1"/>
</dbReference>
<name>BDSA_ANEVI</name>
<organism>
    <name type="scientific">Anemonia viridis</name>
    <name type="common">Snakelocks anemone</name>
    <dbReference type="NCBI Taxonomy" id="51769"/>
    <lineage>
        <taxon>Eukaryota</taxon>
        <taxon>Metazoa</taxon>
        <taxon>Cnidaria</taxon>
        <taxon>Anthozoa</taxon>
        <taxon>Hexacorallia</taxon>
        <taxon>Actiniaria</taxon>
        <taxon>Actiniidae</taxon>
        <taxon>Anemonia</taxon>
    </lineage>
</organism>
<feature type="signal peptide" evidence="2">
    <location>
        <begin position="1"/>
        <end position="19"/>
    </location>
</feature>
<feature type="propeptide" id="PRO_0000433664" evidence="1">
    <location>
        <begin position="20"/>
        <end position="31"/>
    </location>
</feature>
<feature type="chain" id="PRO_0000433665" description="Kappa-actitoxin-Avd4j">
    <location>
        <begin position="34"/>
        <end position="80"/>
    </location>
</feature>
<feature type="disulfide bond" evidence="1">
    <location>
        <begin position="38"/>
        <end position="73"/>
    </location>
</feature>
<feature type="disulfide bond" evidence="1">
    <location>
        <begin position="40"/>
        <end position="66"/>
    </location>
</feature>
<feature type="disulfide bond" evidence="1">
    <location>
        <begin position="56"/>
        <end position="74"/>
    </location>
</feature>
<evidence type="ECO:0000250" key="1">
    <source>
        <dbReference type="UniProtKB" id="P11494"/>
    </source>
</evidence>
<evidence type="ECO:0000255" key="2"/>
<evidence type="ECO:0000269" key="3">
    <source>
    </source>
</evidence>
<evidence type="ECO:0000303" key="4">
    <source>
    </source>
</evidence>
<evidence type="ECO:0000303" key="5">
    <source>
    </source>
</evidence>
<evidence type="ECO:0000305" key="6"/>
<comment type="function">
    <text evidence="1">Blocks Kv3 voltage-gated potassium channels. Reduces blood pressure.</text>
</comment>
<comment type="subcellular location">
    <subcellularLocation>
        <location evidence="6">Secreted</location>
    </subcellularLocation>
    <subcellularLocation>
        <location evidence="6">Nematocyst</location>
    </subcellularLocation>
</comment>
<comment type="tissue specificity">
    <text evidence="3">Weakly expressed in the ectodermal tissue from the distal and proximal tentacles, body wall, and oral disk.</text>
</comment>
<comment type="similarity">
    <text evidence="6">Belongs to the sea anemone type 3 (BDS) potassium channel toxin family.</text>
</comment>
<comment type="caution">
    <text evidence="6">Opinions are divided on whether Anemonia viridis (Forsskal, 1775) and Anemonia sulcata (Pennant, 1777) are separate species.</text>
</comment>
<keyword id="KW-0165">Cleavage on pair of basic residues</keyword>
<keyword id="KW-1015">Disulfide bond</keyword>
<keyword id="KW-0382">Hypotensive agent</keyword>
<keyword id="KW-0872">Ion channel impairing toxin</keyword>
<keyword id="KW-0166">Nematocyst</keyword>
<keyword id="KW-0528">Neurotoxin</keyword>
<keyword id="KW-0632">Potassium channel impairing toxin</keyword>
<keyword id="KW-0964">Secreted</keyword>
<keyword id="KW-0732">Signal</keyword>
<keyword id="KW-0800">Toxin</keyword>
<keyword id="KW-1220">Voltage-gated potassium channel impairing toxin</keyword>
<accession>P0DMY4</accession>
<protein>
    <recommendedName>
        <fullName evidence="5">Kappa-actitoxin-Avd4j</fullName>
        <shortName evidence="5">Kappa-AITX-Avd4j</shortName>
    </recommendedName>
    <alternativeName>
        <fullName>Antihypertensive protein BDS-10</fullName>
    </alternativeName>
    <alternativeName>
        <fullName evidence="4">Blood depressing substance 10</fullName>
        <shortName evidence="4">BDS-10</shortName>
    </alternativeName>
</protein>
<sequence>MNKALFLCLVVLCAAVVFAAEDLQKAKHAPFKRGAQVCFCPGKVDRGDLWILRGDCPGGYGYTSNCYTWPNICCYPQSFSGR</sequence>
<reference key="1">
    <citation type="journal article" date="2009" name="BMC Genomics">
        <title>Comprehensive EST analysis of the symbiotic sea anemone, Anemonia viridis.</title>
        <authorList>
            <person name="Sabourault C."/>
            <person name="Ganot P."/>
            <person name="Deleury E."/>
            <person name="Allemand D."/>
            <person name="Furla P."/>
        </authorList>
    </citation>
    <scope>NUCLEOTIDE SEQUENCE [MRNA]</scope>
</reference>
<reference key="2">
    <citation type="journal article" date="2011" name="BMC Genomics">
        <title>The mining of toxin-like polypeptides from EST database by single residue distribution analysis.</title>
        <authorList>
            <person name="Kozlov S."/>
            <person name="Grishin E."/>
        </authorList>
    </citation>
    <scope>NOMENCLATURE</scope>
</reference>
<reference key="3">
    <citation type="journal article" date="2012" name="Toxicon">
        <title>Development of a rational nomenclature for naming peptide and protein toxins from sea anemones.</title>
        <authorList>
            <person name="Oliveira J.S."/>
            <person name="Fuentes-Silva D."/>
            <person name="King G.F."/>
        </authorList>
    </citation>
    <scope>NOMENCLATURE</scope>
</reference>
<reference key="4">
    <citation type="journal article" date="2013" name="Mar. Drugs">
        <title>Evidence of accelerated evolution and ectodermal-specific expression of presumptive BDS toxin cDNAs from Anemonia viridis.</title>
        <authorList>
            <person name="Nicosia A."/>
            <person name="Maggio T."/>
            <person name="Mazzola S."/>
            <person name="Cuttitta A."/>
        </authorList>
    </citation>
    <scope>3D-STRUCTURE MODELING</scope>
    <scope>TISSUE SPECIFICITY</scope>
</reference>